<evidence type="ECO:0000250" key="1"/>
<evidence type="ECO:0000305" key="2"/>
<keyword id="KW-1035">Host cytoplasm</keyword>
<keyword id="KW-0946">Virion</keyword>
<sequence>MSDEDWQVSRRLFAVLQGGVYSAMLYISSLPEMEQDKCKRSFKKRLSEKETGFIFRLRKAEGIRWSFHTRDYYIGYVREMVAGSSLPDSLRLYVYISNPLWHQSYRPGLTNFNTEWPFVNMWIKTGFMWDDIESQNICKGGEISHGWGPGMVGIVIKAFSCGERKIKITPVMIIRGEIDPTEWCGDCWNLMCLKYSPPNTLQRLAMLACGKEAKEWRGCCNQRFVSPFRTPCDLEVVQNKPKRNLLWTGEL</sequence>
<accession>P31823</accession>
<organism>
    <name type="scientific">Feline immunodeficiency virus (isolate TM2)</name>
    <name type="common">FIV</name>
    <dbReference type="NCBI Taxonomy" id="31676"/>
    <lineage>
        <taxon>Viruses</taxon>
        <taxon>Riboviria</taxon>
        <taxon>Pararnavirae</taxon>
        <taxon>Artverviricota</taxon>
        <taxon>Revtraviricetes</taxon>
        <taxon>Ortervirales</taxon>
        <taxon>Retroviridae</taxon>
        <taxon>Orthoretrovirinae</taxon>
        <taxon>Lentivirus</taxon>
        <taxon>Feline immunodeficiency virus</taxon>
    </lineage>
</organism>
<comment type="function">
    <text>Determines virus infectivity.</text>
</comment>
<comment type="subcellular location">
    <subcellularLocation>
        <location evidence="1">Host cytoplasm</location>
    </subcellularLocation>
    <subcellularLocation>
        <location evidence="1">Virion</location>
    </subcellularLocation>
</comment>
<comment type="similarity">
    <text evidence="2">Belongs to the feline lentivirus group Vif protein family.</text>
</comment>
<feature type="chain" id="PRO_0000085502" description="Virion infectivity factor">
    <location>
        <begin position="1"/>
        <end position="251"/>
    </location>
</feature>
<dbReference type="EMBL" id="M59418">
    <property type="protein sequence ID" value="AAA43073.1"/>
    <property type="molecule type" value="Genomic_RNA"/>
</dbReference>
<dbReference type="PIR" id="C45557">
    <property type="entry name" value="C45557"/>
</dbReference>
<dbReference type="SMR" id="P31823"/>
<dbReference type="GO" id="GO:0030430">
    <property type="term" value="C:host cell cytoplasm"/>
    <property type="evidence" value="ECO:0007669"/>
    <property type="project" value="UniProtKB-SubCell"/>
</dbReference>
<dbReference type="GO" id="GO:0044423">
    <property type="term" value="C:virion component"/>
    <property type="evidence" value="ECO:0007669"/>
    <property type="project" value="UniProtKB-KW"/>
</dbReference>
<dbReference type="GO" id="GO:0019058">
    <property type="term" value="P:viral life cycle"/>
    <property type="evidence" value="ECO:0007669"/>
    <property type="project" value="InterPro"/>
</dbReference>
<dbReference type="InterPro" id="IPR008668">
    <property type="entry name" value="Vir_infectivity_fact_Lentivir"/>
</dbReference>
<dbReference type="Pfam" id="PF05851">
    <property type="entry name" value="Lentivirus_VIF"/>
    <property type="match status" value="1"/>
</dbReference>
<organismHost>
    <name type="scientific">Felidae</name>
    <name type="common">cat family</name>
    <dbReference type="NCBI Taxonomy" id="9681"/>
</organismHost>
<name>VIF_FIVT2</name>
<protein>
    <recommendedName>
        <fullName>Virion infectivity factor</fullName>
    </recommendedName>
</protein>
<gene>
    <name type="primary">vif</name>
</gene>
<reference key="1">
    <citation type="journal article" date="1991" name="J. Virol.">
        <title>Identification of feline immunodeficiency virus rev gene activity.</title>
        <authorList>
            <person name="Kiyomasu T."/>
            <person name="Miyazawa T."/>
            <person name="Furuya T."/>
            <person name="Shibata R."/>
            <person name="Sakai H."/>
            <person name="Sakuragi J.I."/>
            <person name="Fukasawa M."/>
            <person name="Maki N."/>
            <person name="Hasegawa A."/>
            <person name="Mikami T."/>
            <person name="Adachi A."/>
        </authorList>
    </citation>
    <scope>NUCLEOTIDE SEQUENCE [GENOMIC RNA]</scope>
</reference>
<reference key="2">
    <citation type="journal article" date="1992" name="Arch. Virol.">
        <title>Molecular characterization and heterogeneity of feline immunodeficiency virus isolates.</title>
        <authorList>
            <person name="Maki N."/>
            <person name="Miyazawa T."/>
            <person name="Fukasawa M."/>
            <person name="Hasegawa A."/>
            <person name="Hayami M."/>
            <person name="Miki K."/>
            <person name="Mikami T."/>
        </authorList>
    </citation>
    <scope>NUCLEOTIDE SEQUENCE [GENOMIC RNA]</scope>
</reference>
<proteinExistence type="inferred from homology"/>